<sequence>MANLNKRPDWIKVKAPNSTEYYNTKDLIKNLRLNTVCEEAACPNIGECWSKKHTTVMILGSVCTRACRFCNVKTGRPDLLDPHEPQRLAEAVQKLNLKHVVITSVDRDDLEDGGASHFAECISEIRKSSPNTTIEILTPDFLRKEGAAEIIANAKPDVFNHNVETVPSLYKTIRPGARYYNSLSLLHNIKKLSPDIFTKSGMMVGLGEEINEVVQVMDDLREAKVDFLTIGQYLQPTKNHAEVAKYVTPEEFKYLERVAKTKGFLMVSASPLTRSSYHADEDFQKLKENYQQKLVS</sequence>
<feature type="chain" id="PRO_1000058578" description="Lipoyl synthase">
    <location>
        <begin position="1"/>
        <end position="296"/>
    </location>
</feature>
<feature type="domain" description="Radical SAM core" evidence="2">
    <location>
        <begin position="49"/>
        <end position="265"/>
    </location>
</feature>
<feature type="binding site" evidence="1">
    <location>
        <position position="37"/>
    </location>
    <ligand>
        <name>[4Fe-4S] cluster</name>
        <dbReference type="ChEBI" id="CHEBI:49883"/>
        <label>1</label>
    </ligand>
</feature>
<feature type="binding site" evidence="1">
    <location>
        <position position="42"/>
    </location>
    <ligand>
        <name>[4Fe-4S] cluster</name>
        <dbReference type="ChEBI" id="CHEBI:49883"/>
        <label>1</label>
    </ligand>
</feature>
<feature type="binding site" evidence="1">
    <location>
        <position position="48"/>
    </location>
    <ligand>
        <name>[4Fe-4S] cluster</name>
        <dbReference type="ChEBI" id="CHEBI:49883"/>
        <label>1</label>
    </ligand>
</feature>
<feature type="binding site" evidence="1">
    <location>
        <position position="63"/>
    </location>
    <ligand>
        <name>[4Fe-4S] cluster</name>
        <dbReference type="ChEBI" id="CHEBI:49883"/>
        <label>2</label>
        <note>4Fe-4S-S-AdoMet</note>
    </ligand>
</feature>
<feature type="binding site" evidence="1">
    <location>
        <position position="67"/>
    </location>
    <ligand>
        <name>[4Fe-4S] cluster</name>
        <dbReference type="ChEBI" id="CHEBI:49883"/>
        <label>2</label>
        <note>4Fe-4S-S-AdoMet</note>
    </ligand>
</feature>
<feature type="binding site" evidence="1">
    <location>
        <position position="70"/>
    </location>
    <ligand>
        <name>[4Fe-4S] cluster</name>
        <dbReference type="ChEBI" id="CHEBI:49883"/>
        <label>2</label>
        <note>4Fe-4S-S-AdoMet</note>
    </ligand>
</feature>
<feature type="binding site" evidence="1">
    <location>
        <position position="276"/>
    </location>
    <ligand>
        <name>[4Fe-4S] cluster</name>
        <dbReference type="ChEBI" id="CHEBI:49883"/>
        <label>1</label>
    </ligand>
</feature>
<dbReference type="EC" id="2.8.1.8" evidence="1"/>
<dbReference type="EMBL" id="CP000683">
    <property type="protein sequence ID" value="ABV85160.1"/>
    <property type="molecule type" value="Genomic_DNA"/>
</dbReference>
<dbReference type="RefSeq" id="WP_012153124.1">
    <property type="nucleotide sequence ID" value="NC_009900.1"/>
</dbReference>
<dbReference type="SMR" id="A8F2M4"/>
<dbReference type="KEGG" id="rms:RMA_1171"/>
<dbReference type="HOGENOM" id="CLU_033144_2_1_5"/>
<dbReference type="UniPathway" id="UPA00538">
    <property type="reaction ID" value="UER00593"/>
</dbReference>
<dbReference type="Proteomes" id="UP000001311">
    <property type="component" value="Chromosome"/>
</dbReference>
<dbReference type="GO" id="GO:0005737">
    <property type="term" value="C:cytoplasm"/>
    <property type="evidence" value="ECO:0007669"/>
    <property type="project" value="UniProtKB-SubCell"/>
</dbReference>
<dbReference type="GO" id="GO:0051539">
    <property type="term" value="F:4 iron, 4 sulfur cluster binding"/>
    <property type="evidence" value="ECO:0007669"/>
    <property type="project" value="UniProtKB-UniRule"/>
</dbReference>
<dbReference type="GO" id="GO:0016992">
    <property type="term" value="F:lipoate synthase activity"/>
    <property type="evidence" value="ECO:0007669"/>
    <property type="project" value="UniProtKB-UniRule"/>
</dbReference>
<dbReference type="GO" id="GO:0046872">
    <property type="term" value="F:metal ion binding"/>
    <property type="evidence" value="ECO:0007669"/>
    <property type="project" value="UniProtKB-KW"/>
</dbReference>
<dbReference type="CDD" id="cd01335">
    <property type="entry name" value="Radical_SAM"/>
    <property type="match status" value="1"/>
</dbReference>
<dbReference type="FunFam" id="3.20.20.70:FF:000040">
    <property type="entry name" value="Lipoyl synthase"/>
    <property type="match status" value="1"/>
</dbReference>
<dbReference type="Gene3D" id="3.20.20.70">
    <property type="entry name" value="Aldolase class I"/>
    <property type="match status" value="1"/>
</dbReference>
<dbReference type="HAMAP" id="MF_00206">
    <property type="entry name" value="Lipoyl_synth"/>
    <property type="match status" value="1"/>
</dbReference>
<dbReference type="InterPro" id="IPR013785">
    <property type="entry name" value="Aldolase_TIM"/>
</dbReference>
<dbReference type="InterPro" id="IPR006638">
    <property type="entry name" value="Elp3/MiaA/NifB-like_rSAM"/>
</dbReference>
<dbReference type="InterPro" id="IPR031691">
    <property type="entry name" value="LIAS_N"/>
</dbReference>
<dbReference type="InterPro" id="IPR003698">
    <property type="entry name" value="Lipoyl_synth"/>
</dbReference>
<dbReference type="InterPro" id="IPR007197">
    <property type="entry name" value="rSAM"/>
</dbReference>
<dbReference type="NCBIfam" id="TIGR00510">
    <property type="entry name" value="lipA"/>
    <property type="match status" value="1"/>
</dbReference>
<dbReference type="NCBIfam" id="NF004019">
    <property type="entry name" value="PRK05481.1"/>
    <property type="match status" value="1"/>
</dbReference>
<dbReference type="NCBIfam" id="NF009544">
    <property type="entry name" value="PRK12928.1"/>
    <property type="match status" value="1"/>
</dbReference>
<dbReference type="PANTHER" id="PTHR10949">
    <property type="entry name" value="LIPOYL SYNTHASE"/>
    <property type="match status" value="1"/>
</dbReference>
<dbReference type="PANTHER" id="PTHR10949:SF0">
    <property type="entry name" value="LIPOYL SYNTHASE, MITOCHONDRIAL"/>
    <property type="match status" value="1"/>
</dbReference>
<dbReference type="Pfam" id="PF16881">
    <property type="entry name" value="LIAS_N"/>
    <property type="match status" value="1"/>
</dbReference>
<dbReference type="Pfam" id="PF04055">
    <property type="entry name" value="Radical_SAM"/>
    <property type="match status" value="1"/>
</dbReference>
<dbReference type="PIRSF" id="PIRSF005963">
    <property type="entry name" value="Lipoyl_synth"/>
    <property type="match status" value="1"/>
</dbReference>
<dbReference type="SFLD" id="SFLDF00271">
    <property type="entry name" value="lipoyl_synthase"/>
    <property type="match status" value="1"/>
</dbReference>
<dbReference type="SFLD" id="SFLDG01058">
    <property type="entry name" value="lipoyl_synthase_like"/>
    <property type="match status" value="1"/>
</dbReference>
<dbReference type="SMART" id="SM00729">
    <property type="entry name" value="Elp3"/>
    <property type="match status" value="1"/>
</dbReference>
<dbReference type="SUPFAM" id="SSF102114">
    <property type="entry name" value="Radical SAM enzymes"/>
    <property type="match status" value="1"/>
</dbReference>
<dbReference type="PROSITE" id="PS51918">
    <property type="entry name" value="RADICAL_SAM"/>
    <property type="match status" value="1"/>
</dbReference>
<evidence type="ECO:0000255" key="1">
    <source>
        <dbReference type="HAMAP-Rule" id="MF_00206"/>
    </source>
</evidence>
<evidence type="ECO:0000255" key="2">
    <source>
        <dbReference type="PROSITE-ProRule" id="PRU01266"/>
    </source>
</evidence>
<organism>
    <name type="scientific">Rickettsia massiliae (strain Mtu5)</name>
    <dbReference type="NCBI Taxonomy" id="416276"/>
    <lineage>
        <taxon>Bacteria</taxon>
        <taxon>Pseudomonadati</taxon>
        <taxon>Pseudomonadota</taxon>
        <taxon>Alphaproteobacteria</taxon>
        <taxon>Rickettsiales</taxon>
        <taxon>Rickettsiaceae</taxon>
        <taxon>Rickettsieae</taxon>
        <taxon>Rickettsia</taxon>
        <taxon>spotted fever group</taxon>
    </lineage>
</organism>
<name>LIPA_RICM5</name>
<reference key="1">
    <citation type="journal article" date="2007" name="Genome Res.">
        <title>Lateral gene transfer between obligate intracellular bacteria: evidence from the Rickettsia massiliae genome.</title>
        <authorList>
            <person name="Blanc G."/>
            <person name="Ogata H."/>
            <person name="Robert C."/>
            <person name="Audic S."/>
            <person name="Claverie J.-M."/>
            <person name="Raoult D."/>
        </authorList>
    </citation>
    <scope>NUCLEOTIDE SEQUENCE [LARGE SCALE GENOMIC DNA]</scope>
    <source>
        <strain>Mtu5</strain>
    </source>
</reference>
<gene>
    <name evidence="1" type="primary">lipA</name>
    <name type="ordered locus">RMA_1171</name>
</gene>
<proteinExistence type="inferred from homology"/>
<keyword id="KW-0004">4Fe-4S</keyword>
<keyword id="KW-0963">Cytoplasm</keyword>
<keyword id="KW-0408">Iron</keyword>
<keyword id="KW-0411">Iron-sulfur</keyword>
<keyword id="KW-0479">Metal-binding</keyword>
<keyword id="KW-0949">S-adenosyl-L-methionine</keyword>
<keyword id="KW-0808">Transferase</keyword>
<protein>
    <recommendedName>
        <fullName evidence="1">Lipoyl synthase</fullName>
        <ecNumber evidence="1">2.8.1.8</ecNumber>
    </recommendedName>
    <alternativeName>
        <fullName evidence="1">Lip-syn</fullName>
        <shortName evidence="1">LS</shortName>
    </alternativeName>
    <alternativeName>
        <fullName evidence="1">Lipoate synthase</fullName>
    </alternativeName>
    <alternativeName>
        <fullName evidence="1">Lipoic acid synthase</fullName>
    </alternativeName>
    <alternativeName>
        <fullName evidence="1">Sulfur insertion protein LipA</fullName>
    </alternativeName>
</protein>
<comment type="function">
    <text evidence="1">Catalyzes the radical-mediated insertion of two sulfur atoms into the C-6 and C-8 positions of the octanoyl moiety bound to the lipoyl domains of lipoate-dependent enzymes, thereby converting the octanoylated domains into lipoylated derivatives.</text>
</comment>
<comment type="catalytic activity">
    <reaction evidence="1">
        <text>[[Fe-S] cluster scaffold protein carrying a second [4Fe-4S](2+) cluster] + N(6)-octanoyl-L-lysyl-[protein] + 2 oxidized [2Fe-2S]-[ferredoxin] + 2 S-adenosyl-L-methionine + 4 H(+) = [[Fe-S] cluster scaffold protein] + N(6)-[(R)-dihydrolipoyl]-L-lysyl-[protein] + 4 Fe(3+) + 2 hydrogen sulfide + 2 5'-deoxyadenosine + 2 L-methionine + 2 reduced [2Fe-2S]-[ferredoxin]</text>
        <dbReference type="Rhea" id="RHEA:16585"/>
        <dbReference type="Rhea" id="RHEA-COMP:9928"/>
        <dbReference type="Rhea" id="RHEA-COMP:10000"/>
        <dbReference type="Rhea" id="RHEA-COMP:10001"/>
        <dbReference type="Rhea" id="RHEA-COMP:10475"/>
        <dbReference type="Rhea" id="RHEA-COMP:14568"/>
        <dbReference type="Rhea" id="RHEA-COMP:14569"/>
        <dbReference type="ChEBI" id="CHEBI:15378"/>
        <dbReference type="ChEBI" id="CHEBI:17319"/>
        <dbReference type="ChEBI" id="CHEBI:29034"/>
        <dbReference type="ChEBI" id="CHEBI:29919"/>
        <dbReference type="ChEBI" id="CHEBI:33722"/>
        <dbReference type="ChEBI" id="CHEBI:33737"/>
        <dbReference type="ChEBI" id="CHEBI:33738"/>
        <dbReference type="ChEBI" id="CHEBI:57844"/>
        <dbReference type="ChEBI" id="CHEBI:59789"/>
        <dbReference type="ChEBI" id="CHEBI:78809"/>
        <dbReference type="ChEBI" id="CHEBI:83100"/>
        <dbReference type="EC" id="2.8.1.8"/>
    </reaction>
</comment>
<comment type="cofactor">
    <cofactor evidence="1">
        <name>[4Fe-4S] cluster</name>
        <dbReference type="ChEBI" id="CHEBI:49883"/>
    </cofactor>
    <text evidence="1">Binds 2 [4Fe-4S] clusters per subunit. One cluster is coordinated with 3 cysteines and an exchangeable S-adenosyl-L-methionine.</text>
</comment>
<comment type="pathway">
    <text evidence="1">Protein modification; protein lipoylation via endogenous pathway; protein N(6)-(lipoyl)lysine from octanoyl-[acyl-carrier-protein]: step 2/2.</text>
</comment>
<comment type="subcellular location">
    <subcellularLocation>
        <location evidence="1">Cytoplasm</location>
    </subcellularLocation>
</comment>
<comment type="similarity">
    <text evidence="1">Belongs to the radical SAM superfamily. Lipoyl synthase family.</text>
</comment>
<accession>A8F2M4</accession>